<comment type="function">
    <text evidence="1">Catalyzes the reversible isomerization of glucose-6-phosphate to fructose-6-phosphate.</text>
</comment>
<comment type="catalytic activity">
    <reaction evidence="1">
        <text>alpha-D-glucose 6-phosphate = beta-D-fructose 6-phosphate</text>
        <dbReference type="Rhea" id="RHEA:11816"/>
        <dbReference type="ChEBI" id="CHEBI:57634"/>
        <dbReference type="ChEBI" id="CHEBI:58225"/>
        <dbReference type="EC" id="5.3.1.9"/>
    </reaction>
</comment>
<comment type="pathway">
    <text evidence="1">Carbohydrate biosynthesis; gluconeogenesis.</text>
</comment>
<comment type="pathway">
    <text evidence="1">Carbohydrate degradation; glycolysis; D-glyceraldehyde 3-phosphate and glycerone phosphate from D-glucose: step 2/4.</text>
</comment>
<comment type="subcellular location">
    <subcellularLocation>
        <location evidence="1">Cytoplasm</location>
    </subcellularLocation>
</comment>
<comment type="similarity">
    <text evidence="1">Belongs to the GPI family.</text>
</comment>
<feature type="chain" id="PRO_0000180581" description="Glucose-6-phosphate isomerase">
    <location>
        <begin position="1"/>
        <end position="541"/>
    </location>
</feature>
<feature type="active site" description="Proton donor" evidence="1">
    <location>
        <position position="346"/>
    </location>
</feature>
<feature type="active site" evidence="1">
    <location>
        <position position="377"/>
    </location>
</feature>
<feature type="active site" evidence="1">
    <location>
        <position position="506"/>
    </location>
</feature>
<name>G6PI_AGRFC</name>
<proteinExistence type="inferred from homology"/>
<keyword id="KW-0963">Cytoplasm</keyword>
<keyword id="KW-0312">Gluconeogenesis</keyword>
<keyword id="KW-0324">Glycolysis</keyword>
<keyword id="KW-0413">Isomerase</keyword>
<keyword id="KW-1185">Reference proteome</keyword>
<protein>
    <recommendedName>
        <fullName evidence="1">Glucose-6-phosphate isomerase</fullName>
        <shortName evidence="1">GPI</shortName>
        <ecNumber evidence="1">5.3.1.9</ecNumber>
    </recommendedName>
    <alternativeName>
        <fullName evidence="1">Phosphoglucose isomerase</fullName>
        <shortName evidence="1">PGI</shortName>
    </alternativeName>
    <alternativeName>
        <fullName evidence="1">Phosphohexose isomerase</fullName>
        <shortName evidence="1">PHI</shortName>
    </alternativeName>
</protein>
<dbReference type="EC" id="5.3.1.9" evidence="1"/>
<dbReference type="EMBL" id="AE007869">
    <property type="protein sequence ID" value="AAK86219.1"/>
    <property type="molecule type" value="Genomic_DNA"/>
</dbReference>
<dbReference type="PIR" id="AC2626">
    <property type="entry name" value="AC2626"/>
</dbReference>
<dbReference type="PIR" id="B97408">
    <property type="entry name" value="B97408"/>
</dbReference>
<dbReference type="RefSeq" id="NP_353434.1">
    <property type="nucleotide sequence ID" value="NC_003062.2"/>
</dbReference>
<dbReference type="RefSeq" id="WP_010970874.1">
    <property type="nucleotide sequence ID" value="NC_003062.2"/>
</dbReference>
<dbReference type="SMR" id="Q8UI94"/>
<dbReference type="STRING" id="176299.Atu0404"/>
<dbReference type="EnsemblBacteria" id="AAK86219">
    <property type="protein sequence ID" value="AAK86219"/>
    <property type="gene ID" value="Atu0404"/>
</dbReference>
<dbReference type="GeneID" id="1132442"/>
<dbReference type="KEGG" id="atu:Atu0404"/>
<dbReference type="PATRIC" id="fig|176299.10.peg.395"/>
<dbReference type="eggNOG" id="COG0166">
    <property type="taxonomic scope" value="Bacteria"/>
</dbReference>
<dbReference type="HOGENOM" id="CLU_017947_3_1_5"/>
<dbReference type="OrthoDB" id="140919at2"/>
<dbReference type="PhylomeDB" id="Q8UI94"/>
<dbReference type="BioCyc" id="AGRO:ATU0404-MONOMER"/>
<dbReference type="UniPathway" id="UPA00109">
    <property type="reaction ID" value="UER00181"/>
</dbReference>
<dbReference type="UniPathway" id="UPA00138"/>
<dbReference type="Proteomes" id="UP000000813">
    <property type="component" value="Chromosome circular"/>
</dbReference>
<dbReference type="GO" id="GO:0005829">
    <property type="term" value="C:cytosol"/>
    <property type="evidence" value="ECO:0007669"/>
    <property type="project" value="TreeGrafter"/>
</dbReference>
<dbReference type="GO" id="GO:0097367">
    <property type="term" value="F:carbohydrate derivative binding"/>
    <property type="evidence" value="ECO:0007669"/>
    <property type="project" value="InterPro"/>
</dbReference>
<dbReference type="GO" id="GO:0004347">
    <property type="term" value="F:glucose-6-phosphate isomerase activity"/>
    <property type="evidence" value="ECO:0007669"/>
    <property type="project" value="UniProtKB-UniRule"/>
</dbReference>
<dbReference type="GO" id="GO:0048029">
    <property type="term" value="F:monosaccharide binding"/>
    <property type="evidence" value="ECO:0007669"/>
    <property type="project" value="TreeGrafter"/>
</dbReference>
<dbReference type="GO" id="GO:0006094">
    <property type="term" value="P:gluconeogenesis"/>
    <property type="evidence" value="ECO:0007669"/>
    <property type="project" value="UniProtKB-UniRule"/>
</dbReference>
<dbReference type="GO" id="GO:0051156">
    <property type="term" value="P:glucose 6-phosphate metabolic process"/>
    <property type="evidence" value="ECO:0007669"/>
    <property type="project" value="TreeGrafter"/>
</dbReference>
<dbReference type="GO" id="GO:0006096">
    <property type="term" value="P:glycolytic process"/>
    <property type="evidence" value="ECO:0007669"/>
    <property type="project" value="UniProtKB-UniRule"/>
</dbReference>
<dbReference type="CDD" id="cd05015">
    <property type="entry name" value="SIS_PGI_1"/>
    <property type="match status" value="1"/>
</dbReference>
<dbReference type="CDD" id="cd05016">
    <property type="entry name" value="SIS_PGI_2"/>
    <property type="match status" value="1"/>
</dbReference>
<dbReference type="FunFam" id="3.40.50.10490:FF:000018">
    <property type="entry name" value="Glucose-6-phosphate isomerase"/>
    <property type="match status" value="1"/>
</dbReference>
<dbReference type="Gene3D" id="1.10.1390.10">
    <property type="match status" value="1"/>
</dbReference>
<dbReference type="Gene3D" id="3.40.50.10490">
    <property type="entry name" value="Glucose-6-phosphate isomerase like protein, domain 1"/>
    <property type="match status" value="2"/>
</dbReference>
<dbReference type="HAMAP" id="MF_00473">
    <property type="entry name" value="G6P_isomerase"/>
    <property type="match status" value="1"/>
</dbReference>
<dbReference type="InterPro" id="IPR001672">
    <property type="entry name" value="G6P_Isomerase"/>
</dbReference>
<dbReference type="InterPro" id="IPR023096">
    <property type="entry name" value="G6P_Isomerase_C"/>
</dbReference>
<dbReference type="InterPro" id="IPR018189">
    <property type="entry name" value="Phosphoglucose_isomerase_CS"/>
</dbReference>
<dbReference type="InterPro" id="IPR046348">
    <property type="entry name" value="SIS_dom_sf"/>
</dbReference>
<dbReference type="InterPro" id="IPR035476">
    <property type="entry name" value="SIS_PGI_1"/>
</dbReference>
<dbReference type="InterPro" id="IPR035482">
    <property type="entry name" value="SIS_PGI_2"/>
</dbReference>
<dbReference type="NCBIfam" id="NF001211">
    <property type="entry name" value="PRK00179.1"/>
    <property type="match status" value="1"/>
</dbReference>
<dbReference type="PANTHER" id="PTHR11469">
    <property type="entry name" value="GLUCOSE-6-PHOSPHATE ISOMERASE"/>
    <property type="match status" value="1"/>
</dbReference>
<dbReference type="PANTHER" id="PTHR11469:SF1">
    <property type="entry name" value="GLUCOSE-6-PHOSPHATE ISOMERASE"/>
    <property type="match status" value="1"/>
</dbReference>
<dbReference type="Pfam" id="PF00342">
    <property type="entry name" value="PGI"/>
    <property type="match status" value="1"/>
</dbReference>
<dbReference type="PRINTS" id="PR00662">
    <property type="entry name" value="G6PISOMERASE"/>
</dbReference>
<dbReference type="SUPFAM" id="SSF53697">
    <property type="entry name" value="SIS domain"/>
    <property type="match status" value="1"/>
</dbReference>
<dbReference type="PROSITE" id="PS00765">
    <property type="entry name" value="P_GLUCOSE_ISOMERASE_1"/>
    <property type="match status" value="1"/>
</dbReference>
<dbReference type="PROSITE" id="PS00174">
    <property type="entry name" value="P_GLUCOSE_ISOMERASE_2"/>
    <property type="match status" value="1"/>
</dbReference>
<dbReference type="PROSITE" id="PS51463">
    <property type="entry name" value="P_GLUCOSE_ISOMERASE_3"/>
    <property type="match status" value="1"/>
</dbReference>
<reference key="1">
    <citation type="journal article" date="2001" name="Science">
        <title>The genome of the natural genetic engineer Agrobacterium tumefaciens C58.</title>
        <authorList>
            <person name="Wood D.W."/>
            <person name="Setubal J.C."/>
            <person name="Kaul R."/>
            <person name="Monks D.E."/>
            <person name="Kitajima J.P."/>
            <person name="Okura V.K."/>
            <person name="Zhou Y."/>
            <person name="Chen L."/>
            <person name="Wood G.E."/>
            <person name="Almeida N.F. Jr."/>
            <person name="Woo L."/>
            <person name="Chen Y."/>
            <person name="Paulsen I.T."/>
            <person name="Eisen J.A."/>
            <person name="Karp P.D."/>
            <person name="Bovee D. Sr."/>
            <person name="Chapman P."/>
            <person name="Clendenning J."/>
            <person name="Deatherage G."/>
            <person name="Gillet W."/>
            <person name="Grant C."/>
            <person name="Kutyavin T."/>
            <person name="Levy R."/>
            <person name="Li M.-J."/>
            <person name="McClelland E."/>
            <person name="Palmieri A."/>
            <person name="Raymond C."/>
            <person name="Rouse G."/>
            <person name="Saenphimmachak C."/>
            <person name="Wu Z."/>
            <person name="Romero P."/>
            <person name="Gordon D."/>
            <person name="Zhang S."/>
            <person name="Yoo H."/>
            <person name="Tao Y."/>
            <person name="Biddle P."/>
            <person name="Jung M."/>
            <person name="Krespan W."/>
            <person name="Perry M."/>
            <person name="Gordon-Kamm B."/>
            <person name="Liao L."/>
            <person name="Kim S."/>
            <person name="Hendrick C."/>
            <person name="Zhao Z.-Y."/>
            <person name="Dolan M."/>
            <person name="Chumley F."/>
            <person name="Tingey S.V."/>
            <person name="Tomb J.-F."/>
            <person name="Gordon M.P."/>
            <person name="Olson M.V."/>
            <person name="Nester E.W."/>
        </authorList>
    </citation>
    <scope>NUCLEOTIDE SEQUENCE [LARGE SCALE GENOMIC DNA]</scope>
    <source>
        <strain>C58 / ATCC 33970</strain>
    </source>
</reference>
<reference key="2">
    <citation type="journal article" date="2001" name="Science">
        <title>Genome sequence of the plant pathogen and biotechnology agent Agrobacterium tumefaciens C58.</title>
        <authorList>
            <person name="Goodner B."/>
            <person name="Hinkle G."/>
            <person name="Gattung S."/>
            <person name="Miller N."/>
            <person name="Blanchard M."/>
            <person name="Qurollo B."/>
            <person name="Goldman B.S."/>
            <person name="Cao Y."/>
            <person name="Askenazi M."/>
            <person name="Halling C."/>
            <person name="Mullin L."/>
            <person name="Houmiel K."/>
            <person name="Gordon J."/>
            <person name="Vaudin M."/>
            <person name="Iartchouk O."/>
            <person name="Epp A."/>
            <person name="Liu F."/>
            <person name="Wollam C."/>
            <person name="Allinger M."/>
            <person name="Doughty D."/>
            <person name="Scott C."/>
            <person name="Lappas C."/>
            <person name="Markelz B."/>
            <person name="Flanagan C."/>
            <person name="Crowell C."/>
            <person name="Gurson J."/>
            <person name="Lomo C."/>
            <person name="Sear C."/>
            <person name="Strub G."/>
            <person name="Cielo C."/>
            <person name="Slater S."/>
        </authorList>
    </citation>
    <scope>NUCLEOTIDE SEQUENCE [LARGE SCALE GENOMIC DNA]</scope>
    <source>
        <strain>C58 / ATCC 33970</strain>
    </source>
</reference>
<organism>
    <name type="scientific">Agrobacterium fabrum (strain C58 / ATCC 33970)</name>
    <name type="common">Agrobacterium tumefaciens (strain C58)</name>
    <dbReference type="NCBI Taxonomy" id="176299"/>
    <lineage>
        <taxon>Bacteria</taxon>
        <taxon>Pseudomonadati</taxon>
        <taxon>Pseudomonadota</taxon>
        <taxon>Alphaproteobacteria</taxon>
        <taxon>Hyphomicrobiales</taxon>
        <taxon>Rhizobiaceae</taxon>
        <taxon>Rhizobium/Agrobacterium group</taxon>
        <taxon>Agrobacterium</taxon>
        <taxon>Agrobacterium tumefaciens complex</taxon>
    </lineage>
</organism>
<accession>Q8UI94</accession>
<evidence type="ECO:0000255" key="1">
    <source>
        <dbReference type="HAMAP-Rule" id="MF_00473"/>
    </source>
</evidence>
<sequence>MQATIEKLKATASSTAATDLRAAFAADDQRFSRFSVKFDDLLMDYSKCAVNEEIVTLLEQLAREGGVEAKREEMFSGKAINFTEDRAVLHTALRNRSNTPVLVDDKDVMPDVNGVLAAMGKFADAIRSGSLKGATGKKITDVVNIGIGGSDLGPVMATLALAPFHDGPRAHFVSNIDGAHIADTLKLLDPETSLFIIASKTFTTIETMTNAATARRFIAEKLGEGAVKHHFAAVSTALDKVAAFGIESDRIFGFWDWVGGRYSIWSAIGLPLMIAIGPDNFGKFLDGAHAMDRHFREAPIRENLPMLLGLIGFYNRNVLDYPTRAILPYDQRLSRFPAYLQQLDMESNGKGVTIDGTPVEGQSGPVVWGEPGTNGQHAFYQLIHQGTSVIPAEFMIAANGFEPELRHQHQLLIANCLAQSEALMKGRTLAEAKAQLTSKGMEDSQADFIAPHRVFTGNRPSITFVYDKLTPFALGRLIALYEHRVFVEGVLFRINSFDQWGVELGKELATGLLPVVEGKESAAGHDSSTQGLVKALAGLAG</sequence>
<gene>
    <name evidence="1" type="primary">pgi</name>
    <name type="ordered locus">Atu0404</name>
    <name type="ORF">AGR_C_711</name>
</gene>